<keyword id="KW-0030">Aminoacyl-tRNA synthetase</keyword>
<keyword id="KW-0067">ATP-binding</keyword>
<keyword id="KW-0963">Cytoplasm</keyword>
<keyword id="KW-0436">Ligase</keyword>
<keyword id="KW-0547">Nucleotide-binding</keyword>
<keyword id="KW-0648">Protein biosynthesis</keyword>
<keyword id="KW-1185">Reference proteome</keyword>
<feature type="chain" id="PRO_0000110847" description="Aspartate--tRNA(Asp/Asn) ligase">
    <location>
        <begin position="1"/>
        <end position="598"/>
    </location>
</feature>
<feature type="region of interest" description="Aspartate" evidence="1">
    <location>
        <begin position="196"/>
        <end position="199"/>
    </location>
</feature>
<feature type="binding site" evidence="1">
    <location>
        <position position="172"/>
    </location>
    <ligand>
        <name>L-aspartate</name>
        <dbReference type="ChEBI" id="CHEBI:29991"/>
    </ligand>
</feature>
<feature type="binding site" evidence="1">
    <location>
        <begin position="218"/>
        <end position="220"/>
    </location>
    <ligand>
        <name>ATP</name>
        <dbReference type="ChEBI" id="CHEBI:30616"/>
    </ligand>
</feature>
<feature type="binding site" evidence="1">
    <location>
        <position position="218"/>
    </location>
    <ligand>
        <name>L-aspartate</name>
        <dbReference type="ChEBI" id="CHEBI:29991"/>
    </ligand>
</feature>
<feature type="binding site" evidence="1">
    <location>
        <position position="227"/>
    </location>
    <ligand>
        <name>ATP</name>
        <dbReference type="ChEBI" id="CHEBI:30616"/>
    </ligand>
</feature>
<feature type="binding site" evidence="1">
    <location>
        <position position="455"/>
    </location>
    <ligand>
        <name>L-aspartate</name>
        <dbReference type="ChEBI" id="CHEBI:29991"/>
    </ligand>
</feature>
<feature type="binding site" evidence="1">
    <location>
        <position position="489"/>
    </location>
    <ligand>
        <name>ATP</name>
        <dbReference type="ChEBI" id="CHEBI:30616"/>
    </ligand>
</feature>
<feature type="binding site" evidence="1">
    <location>
        <position position="496"/>
    </location>
    <ligand>
        <name>L-aspartate</name>
        <dbReference type="ChEBI" id="CHEBI:29991"/>
    </ligand>
</feature>
<feature type="binding site" evidence="1">
    <location>
        <begin position="541"/>
        <end position="544"/>
    </location>
    <ligand>
        <name>ATP</name>
        <dbReference type="ChEBI" id="CHEBI:30616"/>
    </ligand>
</feature>
<feature type="site" description="Important for tRNA non-discrimination" evidence="1">
    <location>
        <position position="30"/>
    </location>
</feature>
<feature type="site" description="Important for tRNA non-discrimination" evidence="1">
    <location>
        <position position="81"/>
    </location>
</feature>
<protein>
    <recommendedName>
        <fullName evidence="1">Aspartate--tRNA(Asp/Asn) ligase</fullName>
        <ecNumber evidence="1">6.1.1.23</ecNumber>
    </recommendedName>
    <alternativeName>
        <fullName evidence="1">Aspartyl-tRNA synthetase</fullName>
        <shortName evidence="1">AspRS</shortName>
    </alternativeName>
    <alternativeName>
        <fullName evidence="1">Non-discriminating aspartyl-tRNA synthetase</fullName>
        <shortName evidence="1">ND-AspRS</shortName>
    </alternativeName>
</protein>
<proteinExistence type="inferred from homology"/>
<gene>
    <name evidence="1" type="primary">aspS</name>
    <name type="ordered locus">BPSL0644</name>
</gene>
<organism>
    <name type="scientific">Burkholderia pseudomallei (strain K96243)</name>
    <dbReference type="NCBI Taxonomy" id="272560"/>
    <lineage>
        <taxon>Bacteria</taxon>
        <taxon>Pseudomonadati</taxon>
        <taxon>Pseudomonadota</taxon>
        <taxon>Betaproteobacteria</taxon>
        <taxon>Burkholderiales</taxon>
        <taxon>Burkholderiaceae</taxon>
        <taxon>Burkholderia</taxon>
        <taxon>pseudomallei group</taxon>
    </lineage>
</organism>
<evidence type="ECO:0000255" key="1">
    <source>
        <dbReference type="HAMAP-Rule" id="MF_00044"/>
    </source>
</evidence>
<sequence length="598" mass="67462">MRTEYCGLVTEHLLGQTVSLCGWVHRRRDHGGVIFIDLRDREGLVQVVCDPDRAEMFAAAEGVRNEFCIQVKGLVRGRPEGTINAGLKSGRIEVLCHELNVLNASVTPPFQLDDDNLSETTRLTHRVLDLRRPQMQHNLRLRYRVAIEARKYLDEQGFIDIETPMLTKSTPEGARDYLVPSRVNAGQFFALPQSPQLFKQLLMVANFDRYYQITKCFRDEDLRADRQPEFTQIDCETSFLGEQEIRDLFEDMIRHIFKTTIGVELDATFPVMPYSEAMARFGSDKPDLRVKLEFTELTDAMKDVDFKVFSTPANTKDGRVAALRVPKGGELTRGDIDGYTEFVRIYGAKGLAWIKVNERAKGRDGLQSPIVKNLHDASIAAILERTGAQDGDIIFFAADRAKVVNDSLGALRLKIGHSEFGKANGLVEAGWKPLWVVDFPMFEYDDEEARYVAAHHPFTSPKDEHLEYLETDPGRCLAKAYDMVLNGWEIGGGSVRIHREEVQSKVFRALKIGPEEAQAKFGFLLDALQYGAPPHGGIAFGLDRIVTMMAGADSIRDVIAFPKTQRAQCLLTQAPSPVDERQLRELHIRLRQPEQPKA</sequence>
<comment type="function">
    <text evidence="1">Aspartyl-tRNA synthetase with relaxed tRNA specificity since it is able to aspartylate not only its cognate tRNA(Asp) but also tRNA(Asn). Reaction proceeds in two steps: L-aspartate is first activated by ATP to form Asp-AMP and then transferred to the acceptor end of tRNA(Asp/Asn).</text>
</comment>
<comment type="catalytic activity">
    <reaction evidence="1">
        <text>tRNA(Asx) + L-aspartate + ATP = L-aspartyl-tRNA(Asx) + AMP + diphosphate</text>
        <dbReference type="Rhea" id="RHEA:18349"/>
        <dbReference type="Rhea" id="RHEA-COMP:9710"/>
        <dbReference type="Rhea" id="RHEA-COMP:9711"/>
        <dbReference type="ChEBI" id="CHEBI:29991"/>
        <dbReference type="ChEBI" id="CHEBI:30616"/>
        <dbReference type="ChEBI" id="CHEBI:33019"/>
        <dbReference type="ChEBI" id="CHEBI:78442"/>
        <dbReference type="ChEBI" id="CHEBI:78516"/>
        <dbReference type="ChEBI" id="CHEBI:456215"/>
        <dbReference type="EC" id="6.1.1.23"/>
    </reaction>
</comment>
<comment type="subunit">
    <text evidence="1">Homodimer.</text>
</comment>
<comment type="subcellular location">
    <subcellularLocation>
        <location evidence="1">Cytoplasm</location>
    </subcellularLocation>
</comment>
<comment type="similarity">
    <text evidence="1">Belongs to the class-II aminoacyl-tRNA synthetase family. Type 1 subfamily.</text>
</comment>
<name>SYDND_BURPS</name>
<dbReference type="EC" id="6.1.1.23" evidence="1"/>
<dbReference type="EMBL" id="BX571965">
    <property type="protein sequence ID" value="CAH34637.1"/>
    <property type="molecule type" value="Genomic_DNA"/>
</dbReference>
<dbReference type="RefSeq" id="YP_107273.1">
    <property type="nucleotide sequence ID" value="NC_006350.1"/>
</dbReference>
<dbReference type="SMR" id="Q63X93"/>
<dbReference type="STRING" id="272560.BPSL0644"/>
<dbReference type="KEGG" id="bps:BPSL0644"/>
<dbReference type="PATRIC" id="fig|272560.6.peg.700"/>
<dbReference type="eggNOG" id="COG0173">
    <property type="taxonomic scope" value="Bacteria"/>
</dbReference>
<dbReference type="Proteomes" id="UP000000605">
    <property type="component" value="Chromosome 1"/>
</dbReference>
<dbReference type="GO" id="GO:0005737">
    <property type="term" value="C:cytoplasm"/>
    <property type="evidence" value="ECO:0007669"/>
    <property type="project" value="UniProtKB-SubCell"/>
</dbReference>
<dbReference type="GO" id="GO:0004815">
    <property type="term" value="F:aspartate-tRNA ligase activity"/>
    <property type="evidence" value="ECO:0007669"/>
    <property type="project" value="UniProtKB-UniRule"/>
</dbReference>
<dbReference type="GO" id="GO:0050560">
    <property type="term" value="F:aspartate-tRNA(Asn) ligase activity"/>
    <property type="evidence" value="ECO:0007669"/>
    <property type="project" value="UniProtKB-EC"/>
</dbReference>
<dbReference type="GO" id="GO:0005524">
    <property type="term" value="F:ATP binding"/>
    <property type="evidence" value="ECO:0007669"/>
    <property type="project" value="UniProtKB-UniRule"/>
</dbReference>
<dbReference type="GO" id="GO:0003676">
    <property type="term" value="F:nucleic acid binding"/>
    <property type="evidence" value="ECO:0007669"/>
    <property type="project" value="InterPro"/>
</dbReference>
<dbReference type="GO" id="GO:0006422">
    <property type="term" value="P:aspartyl-tRNA aminoacylation"/>
    <property type="evidence" value="ECO:0007669"/>
    <property type="project" value="UniProtKB-UniRule"/>
</dbReference>
<dbReference type="CDD" id="cd00777">
    <property type="entry name" value="AspRS_core"/>
    <property type="match status" value="1"/>
</dbReference>
<dbReference type="CDD" id="cd04317">
    <property type="entry name" value="EcAspRS_like_N"/>
    <property type="match status" value="1"/>
</dbReference>
<dbReference type="Gene3D" id="3.30.930.10">
    <property type="entry name" value="Bira Bifunctional Protein, Domain 2"/>
    <property type="match status" value="1"/>
</dbReference>
<dbReference type="Gene3D" id="3.30.1360.30">
    <property type="entry name" value="GAD-like domain"/>
    <property type="match status" value="1"/>
</dbReference>
<dbReference type="Gene3D" id="2.40.50.140">
    <property type="entry name" value="Nucleic acid-binding proteins"/>
    <property type="match status" value="1"/>
</dbReference>
<dbReference type="HAMAP" id="MF_00044">
    <property type="entry name" value="Asp_tRNA_synth_type1"/>
    <property type="match status" value="1"/>
</dbReference>
<dbReference type="InterPro" id="IPR004364">
    <property type="entry name" value="Aa-tRNA-synt_II"/>
</dbReference>
<dbReference type="InterPro" id="IPR006195">
    <property type="entry name" value="aa-tRNA-synth_II"/>
</dbReference>
<dbReference type="InterPro" id="IPR045864">
    <property type="entry name" value="aa-tRNA-synth_II/BPL/LPL"/>
</dbReference>
<dbReference type="InterPro" id="IPR004524">
    <property type="entry name" value="Asp-tRNA-ligase_1"/>
</dbReference>
<dbReference type="InterPro" id="IPR047089">
    <property type="entry name" value="Asp-tRNA-ligase_1_N"/>
</dbReference>
<dbReference type="InterPro" id="IPR002312">
    <property type="entry name" value="Asp/Asn-tRNA-synth_IIb"/>
</dbReference>
<dbReference type="InterPro" id="IPR047090">
    <property type="entry name" value="AspRS_core"/>
</dbReference>
<dbReference type="InterPro" id="IPR004115">
    <property type="entry name" value="GAD-like_sf"/>
</dbReference>
<dbReference type="InterPro" id="IPR029351">
    <property type="entry name" value="GAD_dom"/>
</dbReference>
<dbReference type="InterPro" id="IPR012340">
    <property type="entry name" value="NA-bd_OB-fold"/>
</dbReference>
<dbReference type="InterPro" id="IPR004365">
    <property type="entry name" value="NA-bd_OB_tRNA"/>
</dbReference>
<dbReference type="NCBIfam" id="TIGR00459">
    <property type="entry name" value="aspS_bact"/>
    <property type="match status" value="1"/>
</dbReference>
<dbReference type="NCBIfam" id="NF001750">
    <property type="entry name" value="PRK00476.1"/>
    <property type="match status" value="1"/>
</dbReference>
<dbReference type="PANTHER" id="PTHR22594:SF5">
    <property type="entry name" value="ASPARTATE--TRNA LIGASE, MITOCHONDRIAL"/>
    <property type="match status" value="1"/>
</dbReference>
<dbReference type="PANTHER" id="PTHR22594">
    <property type="entry name" value="ASPARTYL/LYSYL-TRNA SYNTHETASE"/>
    <property type="match status" value="1"/>
</dbReference>
<dbReference type="Pfam" id="PF02938">
    <property type="entry name" value="GAD"/>
    <property type="match status" value="1"/>
</dbReference>
<dbReference type="Pfam" id="PF00152">
    <property type="entry name" value="tRNA-synt_2"/>
    <property type="match status" value="1"/>
</dbReference>
<dbReference type="Pfam" id="PF01336">
    <property type="entry name" value="tRNA_anti-codon"/>
    <property type="match status" value="1"/>
</dbReference>
<dbReference type="PRINTS" id="PR01042">
    <property type="entry name" value="TRNASYNTHASP"/>
</dbReference>
<dbReference type="SUPFAM" id="SSF55681">
    <property type="entry name" value="Class II aaRS and biotin synthetases"/>
    <property type="match status" value="1"/>
</dbReference>
<dbReference type="SUPFAM" id="SSF55261">
    <property type="entry name" value="GAD domain-like"/>
    <property type="match status" value="1"/>
</dbReference>
<dbReference type="SUPFAM" id="SSF50249">
    <property type="entry name" value="Nucleic acid-binding proteins"/>
    <property type="match status" value="1"/>
</dbReference>
<dbReference type="PROSITE" id="PS50862">
    <property type="entry name" value="AA_TRNA_LIGASE_II"/>
    <property type="match status" value="1"/>
</dbReference>
<reference key="1">
    <citation type="journal article" date="2004" name="Proc. Natl. Acad. Sci. U.S.A.">
        <title>Genomic plasticity of the causative agent of melioidosis, Burkholderia pseudomallei.</title>
        <authorList>
            <person name="Holden M.T.G."/>
            <person name="Titball R.W."/>
            <person name="Peacock S.J."/>
            <person name="Cerdeno-Tarraga A.-M."/>
            <person name="Atkins T."/>
            <person name="Crossman L.C."/>
            <person name="Pitt T."/>
            <person name="Churcher C."/>
            <person name="Mungall K.L."/>
            <person name="Bentley S.D."/>
            <person name="Sebaihia M."/>
            <person name="Thomson N.R."/>
            <person name="Bason N."/>
            <person name="Beacham I.R."/>
            <person name="Brooks K."/>
            <person name="Brown K.A."/>
            <person name="Brown N.F."/>
            <person name="Challis G.L."/>
            <person name="Cherevach I."/>
            <person name="Chillingworth T."/>
            <person name="Cronin A."/>
            <person name="Crossett B."/>
            <person name="Davis P."/>
            <person name="DeShazer D."/>
            <person name="Feltwell T."/>
            <person name="Fraser A."/>
            <person name="Hance Z."/>
            <person name="Hauser H."/>
            <person name="Holroyd S."/>
            <person name="Jagels K."/>
            <person name="Keith K.E."/>
            <person name="Maddison M."/>
            <person name="Moule S."/>
            <person name="Price C."/>
            <person name="Quail M.A."/>
            <person name="Rabbinowitsch E."/>
            <person name="Rutherford K."/>
            <person name="Sanders M."/>
            <person name="Simmonds M."/>
            <person name="Songsivilai S."/>
            <person name="Stevens K."/>
            <person name="Tumapa S."/>
            <person name="Vesaratchavest M."/>
            <person name="Whitehead S."/>
            <person name="Yeats C."/>
            <person name="Barrell B.G."/>
            <person name="Oyston P.C.F."/>
            <person name="Parkhill J."/>
        </authorList>
    </citation>
    <scope>NUCLEOTIDE SEQUENCE [LARGE SCALE GENOMIC DNA]</scope>
    <source>
        <strain>K96243</strain>
    </source>
</reference>
<accession>Q63X93</accession>